<accession>A7X1J9</accession>
<sequence length="243" mass="27921">MSKQKKSEIVNRFRKRFDTKMTELGFTYQNIDLYQQAFSHSSFINDFNMNRLDHNERLEFLGDAVLELTVSRYLFDKHPNLPEGNLTKMRATIVCEPSLVIFANKIGLNEMILLGKGEEKTGGRTRPSLISDAFEAFIGALYLDQGLDIVWKFAEKVIFPHVEQNELLGVVDFKTQFQEYVHQQNKGDVTYNLIKEEGPAHHRLFTSEVILQGEAIAEGKGKTKKESEQRAAKSAYKQLKQIK</sequence>
<proteinExistence type="inferred from homology"/>
<gene>
    <name evidence="1" type="primary">rnc</name>
    <name type="ordered locus">SAHV_1223</name>
</gene>
<feature type="chain" id="PRO_1000075826" description="Ribonuclease 3">
    <location>
        <begin position="1"/>
        <end position="243"/>
    </location>
</feature>
<feature type="domain" description="RNase III" evidence="1">
    <location>
        <begin position="10"/>
        <end position="146"/>
    </location>
</feature>
<feature type="domain" description="DRBM" evidence="1">
    <location>
        <begin position="172"/>
        <end position="241"/>
    </location>
</feature>
<feature type="region of interest" description="Disordered" evidence="2">
    <location>
        <begin position="219"/>
        <end position="243"/>
    </location>
</feature>
<feature type="compositionally biased region" description="Basic and acidic residues" evidence="2">
    <location>
        <begin position="219"/>
        <end position="231"/>
    </location>
</feature>
<feature type="active site" evidence="1">
    <location>
        <position position="63"/>
    </location>
</feature>
<feature type="active site" evidence="1">
    <location>
        <position position="135"/>
    </location>
</feature>
<feature type="binding site" evidence="1">
    <location>
        <position position="59"/>
    </location>
    <ligand>
        <name>Mg(2+)</name>
        <dbReference type="ChEBI" id="CHEBI:18420"/>
    </ligand>
</feature>
<feature type="binding site" evidence="1">
    <location>
        <position position="132"/>
    </location>
    <ligand>
        <name>Mg(2+)</name>
        <dbReference type="ChEBI" id="CHEBI:18420"/>
    </ligand>
</feature>
<feature type="binding site" evidence="1">
    <location>
        <position position="135"/>
    </location>
    <ligand>
        <name>Mg(2+)</name>
        <dbReference type="ChEBI" id="CHEBI:18420"/>
    </ligand>
</feature>
<comment type="function">
    <text evidence="1">Digests double-stranded RNA. Involved in the processing of primary rRNA transcript to yield the immediate precursors to the large and small rRNAs (23S and 16S). Processes some mRNAs, and tRNAs when they are encoded in the rRNA operon. Processes pre-crRNA and tracrRNA of type II CRISPR loci if present in the organism.</text>
</comment>
<comment type="catalytic activity">
    <reaction evidence="1">
        <text>Endonucleolytic cleavage to 5'-phosphomonoester.</text>
        <dbReference type="EC" id="3.1.26.3"/>
    </reaction>
</comment>
<comment type="cofactor">
    <cofactor evidence="1">
        <name>Mg(2+)</name>
        <dbReference type="ChEBI" id="CHEBI:18420"/>
    </cofactor>
</comment>
<comment type="subunit">
    <text evidence="1">Homodimer.</text>
</comment>
<comment type="subcellular location">
    <subcellularLocation>
        <location evidence="1">Cytoplasm</location>
    </subcellularLocation>
</comment>
<comment type="similarity">
    <text evidence="1">Belongs to the ribonuclease III family.</text>
</comment>
<organism>
    <name type="scientific">Staphylococcus aureus (strain Mu3 / ATCC 700698)</name>
    <dbReference type="NCBI Taxonomy" id="418127"/>
    <lineage>
        <taxon>Bacteria</taxon>
        <taxon>Bacillati</taxon>
        <taxon>Bacillota</taxon>
        <taxon>Bacilli</taxon>
        <taxon>Bacillales</taxon>
        <taxon>Staphylococcaceae</taxon>
        <taxon>Staphylococcus</taxon>
    </lineage>
</organism>
<protein>
    <recommendedName>
        <fullName evidence="1">Ribonuclease 3</fullName>
        <ecNumber evidence="1">3.1.26.3</ecNumber>
    </recommendedName>
    <alternativeName>
        <fullName evidence="1">Ribonuclease III</fullName>
        <shortName evidence="1">RNase III</shortName>
    </alternativeName>
</protein>
<dbReference type="EC" id="3.1.26.3" evidence="1"/>
<dbReference type="EMBL" id="AP009324">
    <property type="protein sequence ID" value="BAF78106.1"/>
    <property type="molecule type" value="Genomic_DNA"/>
</dbReference>
<dbReference type="RefSeq" id="WP_000043238.1">
    <property type="nucleotide sequence ID" value="NC_009782.1"/>
</dbReference>
<dbReference type="SMR" id="A7X1J9"/>
<dbReference type="KEGG" id="saw:SAHV_1223"/>
<dbReference type="HOGENOM" id="CLU_000907_1_3_9"/>
<dbReference type="GO" id="GO:0005737">
    <property type="term" value="C:cytoplasm"/>
    <property type="evidence" value="ECO:0007669"/>
    <property type="project" value="UniProtKB-SubCell"/>
</dbReference>
<dbReference type="GO" id="GO:0003725">
    <property type="term" value="F:double-stranded RNA binding"/>
    <property type="evidence" value="ECO:0007669"/>
    <property type="project" value="TreeGrafter"/>
</dbReference>
<dbReference type="GO" id="GO:0046872">
    <property type="term" value="F:metal ion binding"/>
    <property type="evidence" value="ECO:0007669"/>
    <property type="project" value="UniProtKB-KW"/>
</dbReference>
<dbReference type="GO" id="GO:0004525">
    <property type="term" value="F:ribonuclease III activity"/>
    <property type="evidence" value="ECO:0007669"/>
    <property type="project" value="UniProtKB-UniRule"/>
</dbReference>
<dbReference type="GO" id="GO:0019843">
    <property type="term" value="F:rRNA binding"/>
    <property type="evidence" value="ECO:0007669"/>
    <property type="project" value="UniProtKB-KW"/>
</dbReference>
<dbReference type="GO" id="GO:0006397">
    <property type="term" value="P:mRNA processing"/>
    <property type="evidence" value="ECO:0007669"/>
    <property type="project" value="UniProtKB-UniRule"/>
</dbReference>
<dbReference type="GO" id="GO:0010468">
    <property type="term" value="P:regulation of gene expression"/>
    <property type="evidence" value="ECO:0007669"/>
    <property type="project" value="TreeGrafter"/>
</dbReference>
<dbReference type="GO" id="GO:0006364">
    <property type="term" value="P:rRNA processing"/>
    <property type="evidence" value="ECO:0007669"/>
    <property type="project" value="UniProtKB-UniRule"/>
</dbReference>
<dbReference type="GO" id="GO:0008033">
    <property type="term" value="P:tRNA processing"/>
    <property type="evidence" value="ECO:0007669"/>
    <property type="project" value="UniProtKB-KW"/>
</dbReference>
<dbReference type="CDD" id="cd10845">
    <property type="entry name" value="DSRM_RNAse_III_family"/>
    <property type="match status" value="1"/>
</dbReference>
<dbReference type="CDD" id="cd00593">
    <property type="entry name" value="RIBOc"/>
    <property type="match status" value="1"/>
</dbReference>
<dbReference type="FunFam" id="1.10.1520.10:FF:000001">
    <property type="entry name" value="Ribonuclease 3"/>
    <property type="match status" value="1"/>
</dbReference>
<dbReference type="FunFam" id="3.30.160.20:FF:000003">
    <property type="entry name" value="Ribonuclease 3"/>
    <property type="match status" value="1"/>
</dbReference>
<dbReference type="Gene3D" id="3.30.160.20">
    <property type="match status" value="1"/>
</dbReference>
<dbReference type="Gene3D" id="1.10.1520.10">
    <property type="entry name" value="Ribonuclease III domain"/>
    <property type="match status" value="1"/>
</dbReference>
<dbReference type="HAMAP" id="MF_00104">
    <property type="entry name" value="RNase_III"/>
    <property type="match status" value="1"/>
</dbReference>
<dbReference type="InterPro" id="IPR014720">
    <property type="entry name" value="dsRBD_dom"/>
</dbReference>
<dbReference type="InterPro" id="IPR011907">
    <property type="entry name" value="RNase_III"/>
</dbReference>
<dbReference type="InterPro" id="IPR000999">
    <property type="entry name" value="RNase_III_dom"/>
</dbReference>
<dbReference type="InterPro" id="IPR036389">
    <property type="entry name" value="RNase_III_sf"/>
</dbReference>
<dbReference type="NCBIfam" id="TIGR02191">
    <property type="entry name" value="RNaseIII"/>
    <property type="match status" value="1"/>
</dbReference>
<dbReference type="PANTHER" id="PTHR11207:SF0">
    <property type="entry name" value="RIBONUCLEASE 3"/>
    <property type="match status" value="1"/>
</dbReference>
<dbReference type="PANTHER" id="PTHR11207">
    <property type="entry name" value="RIBONUCLEASE III"/>
    <property type="match status" value="1"/>
</dbReference>
<dbReference type="Pfam" id="PF00035">
    <property type="entry name" value="dsrm"/>
    <property type="match status" value="1"/>
</dbReference>
<dbReference type="Pfam" id="PF14622">
    <property type="entry name" value="Ribonucleas_3_3"/>
    <property type="match status" value="1"/>
</dbReference>
<dbReference type="SMART" id="SM00358">
    <property type="entry name" value="DSRM"/>
    <property type="match status" value="1"/>
</dbReference>
<dbReference type="SMART" id="SM00535">
    <property type="entry name" value="RIBOc"/>
    <property type="match status" value="1"/>
</dbReference>
<dbReference type="SUPFAM" id="SSF54768">
    <property type="entry name" value="dsRNA-binding domain-like"/>
    <property type="match status" value="1"/>
</dbReference>
<dbReference type="SUPFAM" id="SSF69065">
    <property type="entry name" value="RNase III domain-like"/>
    <property type="match status" value="1"/>
</dbReference>
<dbReference type="PROSITE" id="PS50137">
    <property type="entry name" value="DS_RBD"/>
    <property type="match status" value="1"/>
</dbReference>
<dbReference type="PROSITE" id="PS00517">
    <property type="entry name" value="RNASE_3_1"/>
    <property type="match status" value="1"/>
</dbReference>
<dbReference type="PROSITE" id="PS50142">
    <property type="entry name" value="RNASE_3_2"/>
    <property type="match status" value="1"/>
</dbReference>
<reference key="1">
    <citation type="journal article" date="2008" name="Antimicrob. Agents Chemother.">
        <title>Mutated response regulator graR is responsible for phenotypic conversion of Staphylococcus aureus from heterogeneous vancomycin-intermediate resistance to vancomycin-intermediate resistance.</title>
        <authorList>
            <person name="Neoh H.-M."/>
            <person name="Cui L."/>
            <person name="Yuzawa H."/>
            <person name="Takeuchi F."/>
            <person name="Matsuo M."/>
            <person name="Hiramatsu K."/>
        </authorList>
    </citation>
    <scope>NUCLEOTIDE SEQUENCE [LARGE SCALE GENOMIC DNA]</scope>
    <source>
        <strain>Mu3 / ATCC 700698</strain>
    </source>
</reference>
<name>RNC_STAA1</name>
<evidence type="ECO:0000255" key="1">
    <source>
        <dbReference type="HAMAP-Rule" id="MF_00104"/>
    </source>
</evidence>
<evidence type="ECO:0000256" key="2">
    <source>
        <dbReference type="SAM" id="MobiDB-lite"/>
    </source>
</evidence>
<keyword id="KW-0963">Cytoplasm</keyword>
<keyword id="KW-0255">Endonuclease</keyword>
<keyword id="KW-0378">Hydrolase</keyword>
<keyword id="KW-0460">Magnesium</keyword>
<keyword id="KW-0479">Metal-binding</keyword>
<keyword id="KW-0507">mRNA processing</keyword>
<keyword id="KW-0540">Nuclease</keyword>
<keyword id="KW-0694">RNA-binding</keyword>
<keyword id="KW-0698">rRNA processing</keyword>
<keyword id="KW-0699">rRNA-binding</keyword>
<keyword id="KW-0819">tRNA processing</keyword>